<keyword id="KW-0027">Amidation</keyword>
<keyword id="KW-0964">Secreted</keyword>
<keyword id="KW-0732">Signal</keyword>
<keyword id="KW-0800">Toxin</keyword>
<evidence type="ECO:0000255" key="1"/>
<evidence type="ECO:0000269" key="2">
    <source>
    </source>
</evidence>
<evidence type="ECO:0000303" key="3">
    <source>
    </source>
</evidence>
<evidence type="ECO:0000305" key="4"/>
<evidence type="ECO:0000305" key="5">
    <source>
    </source>
</evidence>
<evidence type="ECO:0000312" key="6">
    <source>
        <dbReference type="EMBL" id="UPH34055.1"/>
    </source>
</evidence>
<sequence length="79" mass="7957">MEIPKFLLIAIIVVGLSGSLTWAHSSAIANPEAIAEAIAEAFANAEAEAEPVAPIVAMAGLGLFAAAVAGLDWLSKKVG</sequence>
<reference key="1">
    <citation type="journal article" date="2023" name="Nat. Commun.">
        <title>Ant venoms contain vertebrate-selective pain-causing sodium channel toxins.</title>
        <authorList>
            <person name="Robinson S.D."/>
            <person name="Deuis J.R."/>
            <person name="Touchard A."/>
            <person name="Keramidas A."/>
            <person name="Mueller A."/>
            <person name="Schroeder C.I."/>
            <person name="Barasse V."/>
            <person name="Walker A.A."/>
            <person name="Brinkwirth N."/>
            <person name="Jami S."/>
            <person name="Bonnafe E."/>
            <person name="Treilhou M."/>
            <person name="Undheim E.A.B."/>
            <person name="Schmidt J.O."/>
            <person name="King G.F."/>
            <person name="Vetter I."/>
        </authorList>
    </citation>
    <scope>NUCLEOTIDE SEQUENCE [MRNA]</scope>
    <scope>FUNCTION</scope>
    <scope>BIOASSAY</scope>
    <scope>TOXIC DOSE</scope>
    <scope>SYNTHESIS OF 52-78</scope>
    <scope>PROBABLE AMIDATION AT VAL-78</scope>
    <source>
        <tissue>Venom gland</tissue>
    </source>
</reference>
<protein>
    <recommendedName>
        <fullName evidence="4">Ectatotoxin-Rm1a</fullName>
        <shortName evidence="3">ECTX-Rm1a</shortName>
        <shortName evidence="6">ECTX1-Rm1a</shortName>
    </recommendedName>
</protein>
<feature type="signal peptide" evidence="1">
    <location>
        <begin position="1"/>
        <end position="23"/>
    </location>
</feature>
<feature type="propeptide" id="PRO_0000459148" evidence="5">
    <location>
        <begin position="24"/>
        <end position="51"/>
    </location>
</feature>
<feature type="peptide" id="PRO_5035826097" description="Ectatotoxin-Rm1a" evidence="5">
    <location>
        <begin position="52"/>
        <end position="78"/>
    </location>
</feature>
<feature type="modified residue" description="Valine amide" evidence="5">
    <location>
        <position position="78"/>
    </location>
</feature>
<name>RM1A_RHYMT</name>
<accession>A0A8U0LTY4</accession>
<organism>
    <name type="scientific">Rhytidoponera metallica</name>
    <name type="common">Australian green-headed ant</name>
    <name type="synonym">Ponera metallica</name>
    <dbReference type="NCBI Taxonomy" id="148364"/>
    <lineage>
        <taxon>Eukaryota</taxon>
        <taxon>Metazoa</taxon>
        <taxon>Ecdysozoa</taxon>
        <taxon>Arthropoda</taxon>
        <taxon>Hexapoda</taxon>
        <taxon>Insecta</taxon>
        <taxon>Pterygota</taxon>
        <taxon>Neoptera</taxon>
        <taxon>Endopterygota</taxon>
        <taxon>Hymenoptera</taxon>
        <taxon>Apocrita</taxon>
        <taxon>Aculeata</taxon>
        <taxon>Formicoidea</taxon>
        <taxon>Formicidae</taxon>
        <taxon>Ectatomminae</taxon>
        <taxon>Ectatommini</taxon>
        <taxon>Rhytidoponera</taxon>
    </lineage>
</organism>
<comment type="function">
    <text evidence="2">Toxin that paralyzes and kills insects.</text>
</comment>
<comment type="subcellular location">
    <subcellularLocation>
        <location evidence="5">Secreted</location>
    </subcellularLocation>
</comment>
<comment type="tissue specificity">
    <text evidence="5">Expressed by the venom gland.</text>
</comment>
<comment type="toxic dose">
    <text evidence="2">PD(50) (measured at 1 hour) is 0.27 nmol/g by intrathoracic injection into blowflies (Lucilia caesar). Is lethal by intrathoracic injection to blowflies at the highest dose tested (162 nmol/g).</text>
</comment>
<proteinExistence type="evidence at protein level"/>
<dbReference type="EMBL" id="MW317022">
    <property type="protein sequence ID" value="UPH34055.1"/>
    <property type="molecule type" value="mRNA"/>
</dbReference>
<dbReference type="GO" id="GO:0005576">
    <property type="term" value="C:extracellular region"/>
    <property type="evidence" value="ECO:0007669"/>
    <property type="project" value="UniProtKB-SubCell"/>
</dbReference>
<dbReference type="GO" id="GO:0090729">
    <property type="term" value="F:toxin activity"/>
    <property type="evidence" value="ECO:0007669"/>
    <property type="project" value="UniProtKB-KW"/>
</dbReference>